<accession>A4ITW9</accession>
<keyword id="KW-0963">Cytoplasm</keyword>
<keyword id="KW-0489">Methyltransferase</keyword>
<keyword id="KW-0698">rRNA processing</keyword>
<keyword id="KW-0949">S-adenosyl-L-methionine</keyword>
<keyword id="KW-0808">Transferase</keyword>
<name>RSMG_GEOTN</name>
<proteinExistence type="inferred from homology"/>
<feature type="chain" id="PRO_1000010152" description="Ribosomal RNA small subunit methyltransferase G">
    <location>
        <begin position="1"/>
        <end position="238"/>
    </location>
</feature>
<feature type="region of interest" description="Disordered" evidence="2">
    <location>
        <begin position="219"/>
        <end position="238"/>
    </location>
</feature>
<feature type="binding site" evidence="1">
    <location>
        <position position="77"/>
    </location>
    <ligand>
        <name>S-adenosyl-L-methionine</name>
        <dbReference type="ChEBI" id="CHEBI:59789"/>
    </ligand>
</feature>
<feature type="binding site" evidence="1">
    <location>
        <position position="82"/>
    </location>
    <ligand>
        <name>S-adenosyl-L-methionine</name>
        <dbReference type="ChEBI" id="CHEBI:59789"/>
    </ligand>
</feature>
<feature type="binding site" evidence="1">
    <location>
        <begin position="128"/>
        <end position="129"/>
    </location>
    <ligand>
        <name>S-adenosyl-L-methionine</name>
        <dbReference type="ChEBI" id="CHEBI:59789"/>
    </ligand>
</feature>
<feature type="binding site" evidence="1">
    <location>
        <position position="147"/>
    </location>
    <ligand>
        <name>S-adenosyl-L-methionine</name>
        <dbReference type="ChEBI" id="CHEBI:59789"/>
    </ligand>
</feature>
<gene>
    <name evidence="1" type="primary">rsmG</name>
    <name type="ordered locus">GTNG_3438</name>
</gene>
<protein>
    <recommendedName>
        <fullName evidence="1">Ribosomal RNA small subunit methyltransferase G</fullName>
        <ecNumber evidence="1">2.1.1.-</ecNumber>
    </recommendedName>
    <alternativeName>
        <fullName evidence="1">16S rRNA 7-methylguanosine methyltransferase</fullName>
        <shortName evidence="1">16S rRNA m7G methyltransferase</shortName>
    </alternativeName>
</protein>
<comment type="function">
    <text evidence="1">Specifically methylates the N7 position of guanine in position 535 of 16S rRNA.</text>
</comment>
<comment type="subcellular location">
    <subcellularLocation>
        <location evidence="1">Cytoplasm</location>
    </subcellularLocation>
</comment>
<comment type="similarity">
    <text evidence="1">Belongs to the methyltransferase superfamily. RNA methyltransferase RsmG family.</text>
</comment>
<organism>
    <name type="scientific">Geobacillus thermodenitrificans (strain NG80-2)</name>
    <dbReference type="NCBI Taxonomy" id="420246"/>
    <lineage>
        <taxon>Bacteria</taxon>
        <taxon>Bacillati</taxon>
        <taxon>Bacillota</taxon>
        <taxon>Bacilli</taxon>
        <taxon>Bacillales</taxon>
        <taxon>Anoxybacillaceae</taxon>
        <taxon>Geobacillus</taxon>
    </lineage>
</organism>
<evidence type="ECO:0000255" key="1">
    <source>
        <dbReference type="HAMAP-Rule" id="MF_00074"/>
    </source>
</evidence>
<evidence type="ECO:0000256" key="2">
    <source>
        <dbReference type="SAM" id="MobiDB-lite"/>
    </source>
</evidence>
<dbReference type="EC" id="2.1.1.-" evidence="1"/>
<dbReference type="EMBL" id="CP000557">
    <property type="protein sequence ID" value="ABO68773.1"/>
    <property type="molecule type" value="Genomic_DNA"/>
</dbReference>
<dbReference type="RefSeq" id="WP_008880826.1">
    <property type="nucleotide sequence ID" value="NC_009328.1"/>
</dbReference>
<dbReference type="SMR" id="A4ITW9"/>
<dbReference type="KEGG" id="gtn:GTNG_3438"/>
<dbReference type="eggNOG" id="COG0357">
    <property type="taxonomic scope" value="Bacteria"/>
</dbReference>
<dbReference type="HOGENOM" id="CLU_065341_0_2_9"/>
<dbReference type="Proteomes" id="UP000001578">
    <property type="component" value="Chromosome"/>
</dbReference>
<dbReference type="GO" id="GO:0005829">
    <property type="term" value="C:cytosol"/>
    <property type="evidence" value="ECO:0007669"/>
    <property type="project" value="TreeGrafter"/>
</dbReference>
<dbReference type="GO" id="GO:0070043">
    <property type="term" value="F:rRNA (guanine-N7-)-methyltransferase activity"/>
    <property type="evidence" value="ECO:0007669"/>
    <property type="project" value="UniProtKB-UniRule"/>
</dbReference>
<dbReference type="CDD" id="cd02440">
    <property type="entry name" value="AdoMet_MTases"/>
    <property type="match status" value="1"/>
</dbReference>
<dbReference type="FunFam" id="3.40.50.150:FF:000041">
    <property type="entry name" value="Ribosomal RNA small subunit methyltransferase G"/>
    <property type="match status" value="1"/>
</dbReference>
<dbReference type="Gene3D" id="3.40.50.150">
    <property type="entry name" value="Vaccinia Virus protein VP39"/>
    <property type="match status" value="1"/>
</dbReference>
<dbReference type="HAMAP" id="MF_00074">
    <property type="entry name" value="16SrRNA_methyltr_G"/>
    <property type="match status" value="1"/>
</dbReference>
<dbReference type="InterPro" id="IPR003682">
    <property type="entry name" value="rRNA_ssu_MeTfrase_G"/>
</dbReference>
<dbReference type="InterPro" id="IPR029063">
    <property type="entry name" value="SAM-dependent_MTases_sf"/>
</dbReference>
<dbReference type="NCBIfam" id="TIGR00138">
    <property type="entry name" value="rsmG_gidB"/>
    <property type="match status" value="1"/>
</dbReference>
<dbReference type="PANTHER" id="PTHR31760">
    <property type="entry name" value="S-ADENOSYL-L-METHIONINE-DEPENDENT METHYLTRANSFERASES SUPERFAMILY PROTEIN"/>
    <property type="match status" value="1"/>
</dbReference>
<dbReference type="PANTHER" id="PTHR31760:SF0">
    <property type="entry name" value="S-ADENOSYL-L-METHIONINE-DEPENDENT METHYLTRANSFERASES SUPERFAMILY PROTEIN"/>
    <property type="match status" value="1"/>
</dbReference>
<dbReference type="Pfam" id="PF02527">
    <property type="entry name" value="GidB"/>
    <property type="match status" value="1"/>
</dbReference>
<dbReference type="PIRSF" id="PIRSF003078">
    <property type="entry name" value="GidB"/>
    <property type="match status" value="1"/>
</dbReference>
<dbReference type="SUPFAM" id="SSF53335">
    <property type="entry name" value="S-adenosyl-L-methionine-dependent methyltransferases"/>
    <property type="match status" value="1"/>
</dbReference>
<reference key="1">
    <citation type="journal article" date="2007" name="Proc. Natl. Acad. Sci. U.S.A.">
        <title>Genome and proteome of long-chain alkane degrading Geobacillus thermodenitrificans NG80-2 isolated from a deep-subsurface oil reservoir.</title>
        <authorList>
            <person name="Feng L."/>
            <person name="Wang W."/>
            <person name="Cheng J."/>
            <person name="Ren Y."/>
            <person name="Zhao G."/>
            <person name="Gao C."/>
            <person name="Tang Y."/>
            <person name="Liu X."/>
            <person name="Han W."/>
            <person name="Peng X."/>
            <person name="Liu R."/>
            <person name="Wang L."/>
        </authorList>
    </citation>
    <scope>NUCLEOTIDE SEQUENCE [LARGE SCALE GENOMIC DNA]</scope>
    <source>
        <strain>NG80-2</strain>
    </source>
</reference>
<sequence>MEATQFQAMLEERGISLSSQALAQFERYYELLVEWNEKMNLTAITDKPGVYVKHFFDSVSPAFYYDFSEPFSLCDVGAGAGFPSIPLKICFPHLRVSIVDSLQKRIRFLQHLVGELGLKDIALYHDRAETFARQKGMRESFDVVTARAVARMPVLAELCLPLTKVGGTFLAMKAASAPEELKEGEKAIAVLGGEVTATETFMLPFEEGERTIIFVQKTKKTPARYPRKPGTPNKQPIQ</sequence>